<gene>
    <name type="primary">gnd</name>
    <name type="ordered locus">bbp_101</name>
</gene>
<keyword id="KW-0311">Gluconate utilization</keyword>
<keyword id="KW-0521">NADP</keyword>
<keyword id="KW-0560">Oxidoreductase</keyword>
<keyword id="KW-0570">Pentose shunt</keyword>
<keyword id="KW-1185">Reference proteome</keyword>
<feature type="chain" id="PRO_0000090030" description="6-phosphogluconate dehydrogenase, decarboxylating">
    <location>
        <begin position="1"/>
        <end position="468"/>
    </location>
</feature>
<feature type="active site" description="Proton acceptor" evidence="1">
    <location>
        <position position="182"/>
    </location>
</feature>
<feature type="active site" description="Proton donor" evidence="1">
    <location>
        <position position="189"/>
    </location>
</feature>
<feature type="binding site" evidence="1">
    <location>
        <begin position="10"/>
        <end position="15"/>
    </location>
    <ligand>
        <name>NADP(+)</name>
        <dbReference type="ChEBI" id="CHEBI:58349"/>
    </ligand>
</feature>
<feature type="binding site" evidence="1">
    <location>
        <begin position="33"/>
        <end position="35"/>
    </location>
    <ligand>
        <name>NADP(+)</name>
        <dbReference type="ChEBI" id="CHEBI:58349"/>
    </ligand>
</feature>
<feature type="binding site" evidence="1">
    <location>
        <begin position="74"/>
        <end position="76"/>
    </location>
    <ligand>
        <name>NADP(+)</name>
        <dbReference type="ChEBI" id="CHEBI:58349"/>
    </ligand>
</feature>
<feature type="binding site" evidence="1">
    <location>
        <position position="102"/>
    </location>
    <ligand>
        <name>NADP(+)</name>
        <dbReference type="ChEBI" id="CHEBI:58349"/>
    </ligand>
</feature>
<feature type="binding site" description="in other chain" evidence="1">
    <location>
        <position position="102"/>
    </location>
    <ligand>
        <name>substrate</name>
        <note>ligand shared between dimeric partners</note>
    </ligand>
</feature>
<feature type="binding site" description="in other chain" evidence="1">
    <location>
        <begin position="128"/>
        <end position="130"/>
    </location>
    <ligand>
        <name>substrate</name>
        <note>ligand shared between dimeric partners</note>
    </ligand>
</feature>
<feature type="binding site" description="in other chain" evidence="1">
    <location>
        <begin position="185"/>
        <end position="186"/>
    </location>
    <ligand>
        <name>substrate</name>
        <note>ligand shared between dimeric partners</note>
    </ligand>
</feature>
<feature type="binding site" description="in other chain" evidence="1">
    <location>
        <position position="190"/>
    </location>
    <ligand>
        <name>substrate</name>
        <note>ligand shared between dimeric partners</note>
    </ligand>
</feature>
<feature type="binding site" description="in other chain" evidence="1">
    <location>
        <position position="259"/>
    </location>
    <ligand>
        <name>substrate</name>
        <note>ligand shared between dimeric partners</note>
    </ligand>
</feature>
<feature type="binding site" description="in other chain" evidence="1">
    <location>
        <position position="286"/>
    </location>
    <ligand>
        <name>substrate</name>
        <note>ligand shared between dimeric partners</note>
    </ligand>
</feature>
<feature type="binding site" evidence="1">
    <location>
        <position position="445"/>
    </location>
    <ligand>
        <name>substrate</name>
        <note>ligand shared between dimeric partners</note>
    </ligand>
</feature>
<feature type="binding site" evidence="1">
    <location>
        <position position="451"/>
    </location>
    <ligand>
        <name>substrate</name>
        <note>ligand shared between dimeric partners</note>
    </ligand>
</feature>
<sequence length="468" mass="52646">MAKQQIGVIGMAVMGRNLALNMERNQYTVSIFNRSLDITEKIILNNPNKNLFPFFSIKDFVLSLIVPRCIVLMIKSGVATDDTIKSLIPYLSKGDIIIDGGNTFYKDTIQRGYELLKIGVNLIGAGFSGGEKGALYGPSIMPGGRQEAYNYVSPILKKIASNSEGIPCVTYIGPDGSGHYVKMVHNGIEYGDMQLIAESYFILKTLLRLDNQSISKIFDIWNQGELNSYLIDITKDILIKKDDQNNYLIDCILDEGSSKGTGTWTTKSALDLNEPLTLITESVFFRYLSSLKSQRLLASKILCGPKDFFIVLNRDDFIEKIRQALYLGKIISYAQGFSQLNSASQKYNWNLKLGEISRIFQSGCIIRAKLLKNITQEYSSNNNFVNLLLTPYFREIANTYHSSLREIVSISVKYGIPIPALSSAISYFDSYRSAFLPSNLIQAQRDFFGAHTYKRIDKSGIFHTNWYS</sequence>
<proteinExistence type="inferred from homology"/>
<comment type="function">
    <text evidence="1">Catalyzes the oxidative decarboxylation of 6-phosphogluconate to ribulose 5-phosphate and CO(2), with concomitant reduction of NADP to NADPH.</text>
</comment>
<comment type="catalytic activity">
    <reaction>
        <text>6-phospho-D-gluconate + NADP(+) = D-ribulose 5-phosphate + CO2 + NADPH</text>
        <dbReference type="Rhea" id="RHEA:10116"/>
        <dbReference type="ChEBI" id="CHEBI:16526"/>
        <dbReference type="ChEBI" id="CHEBI:57783"/>
        <dbReference type="ChEBI" id="CHEBI:58121"/>
        <dbReference type="ChEBI" id="CHEBI:58349"/>
        <dbReference type="ChEBI" id="CHEBI:58759"/>
        <dbReference type="EC" id="1.1.1.44"/>
    </reaction>
</comment>
<comment type="pathway">
    <text>Carbohydrate degradation; pentose phosphate pathway; D-ribulose 5-phosphate from D-glucose 6-phosphate (oxidative stage): step 3/3.</text>
</comment>
<comment type="subunit">
    <text evidence="1">Homodimer.</text>
</comment>
<comment type="similarity">
    <text evidence="2">Belongs to the 6-phosphogluconate dehydrogenase family.</text>
</comment>
<evidence type="ECO:0000250" key="1"/>
<evidence type="ECO:0000305" key="2"/>
<name>6PGD_BUCBP</name>
<organism>
    <name type="scientific">Buchnera aphidicola subsp. Baizongia pistaciae (strain Bp)</name>
    <dbReference type="NCBI Taxonomy" id="224915"/>
    <lineage>
        <taxon>Bacteria</taxon>
        <taxon>Pseudomonadati</taxon>
        <taxon>Pseudomonadota</taxon>
        <taxon>Gammaproteobacteria</taxon>
        <taxon>Enterobacterales</taxon>
        <taxon>Erwiniaceae</taxon>
        <taxon>Buchnera</taxon>
    </lineage>
</organism>
<accession>Q89AX5</accession>
<protein>
    <recommendedName>
        <fullName>6-phosphogluconate dehydrogenase, decarboxylating</fullName>
        <ecNumber>1.1.1.44</ecNumber>
    </recommendedName>
</protein>
<dbReference type="EC" id="1.1.1.44"/>
<dbReference type="EMBL" id="AE016826">
    <property type="protein sequence ID" value="AAO26836.1"/>
    <property type="molecule type" value="Genomic_DNA"/>
</dbReference>
<dbReference type="RefSeq" id="WP_011091237.1">
    <property type="nucleotide sequence ID" value="NC_004545.1"/>
</dbReference>
<dbReference type="SMR" id="Q89AX5"/>
<dbReference type="STRING" id="224915.bbp_101"/>
<dbReference type="KEGG" id="bab:bbp_101"/>
<dbReference type="eggNOG" id="COG0362">
    <property type="taxonomic scope" value="Bacteria"/>
</dbReference>
<dbReference type="HOGENOM" id="CLU_024540_4_2_6"/>
<dbReference type="OrthoDB" id="9804542at2"/>
<dbReference type="UniPathway" id="UPA00115">
    <property type="reaction ID" value="UER00410"/>
</dbReference>
<dbReference type="Proteomes" id="UP000000601">
    <property type="component" value="Chromosome"/>
</dbReference>
<dbReference type="GO" id="GO:0050661">
    <property type="term" value="F:NADP binding"/>
    <property type="evidence" value="ECO:0007669"/>
    <property type="project" value="InterPro"/>
</dbReference>
<dbReference type="GO" id="GO:0004616">
    <property type="term" value="F:phosphogluconate dehydrogenase (decarboxylating) activity"/>
    <property type="evidence" value="ECO:0000250"/>
    <property type="project" value="UniProtKB"/>
</dbReference>
<dbReference type="GO" id="GO:0019521">
    <property type="term" value="P:D-gluconate metabolic process"/>
    <property type="evidence" value="ECO:0007669"/>
    <property type="project" value="UniProtKB-KW"/>
</dbReference>
<dbReference type="GO" id="GO:0016054">
    <property type="term" value="P:organic acid catabolic process"/>
    <property type="evidence" value="ECO:0007669"/>
    <property type="project" value="UniProtKB-ARBA"/>
</dbReference>
<dbReference type="GO" id="GO:0006098">
    <property type="term" value="P:pentose-phosphate shunt"/>
    <property type="evidence" value="ECO:0000250"/>
    <property type="project" value="UniProtKB"/>
</dbReference>
<dbReference type="FunFam" id="1.10.1040.10:FF:000002">
    <property type="entry name" value="6-phosphogluconate dehydrogenase, decarboxylating"/>
    <property type="match status" value="1"/>
</dbReference>
<dbReference type="FunFam" id="1.20.5.320:FF:000001">
    <property type="entry name" value="6-phosphogluconate dehydrogenase, decarboxylating"/>
    <property type="match status" value="1"/>
</dbReference>
<dbReference type="FunFam" id="3.40.50.720:FF:000007">
    <property type="entry name" value="6-phosphogluconate dehydrogenase, decarboxylating"/>
    <property type="match status" value="1"/>
</dbReference>
<dbReference type="Gene3D" id="1.20.5.320">
    <property type="entry name" value="6-Phosphogluconate Dehydrogenase, domain 3"/>
    <property type="match status" value="1"/>
</dbReference>
<dbReference type="Gene3D" id="1.10.1040.10">
    <property type="entry name" value="N-(1-d-carboxylethyl)-l-norvaline Dehydrogenase, domain 2"/>
    <property type="match status" value="1"/>
</dbReference>
<dbReference type="Gene3D" id="3.40.50.720">
    <property type="entry name" value="NAD(P)-binding Rossmann-like Domain"/>
    <property type="match status" value="1"/>
</dbReference>
<dbReference type="InterPro" id="IPR008927">
    <property type="entry name" value="6-PGluconate_DH-like_C_sf"/>
</dbReference>
<dbReference type="InterPro" id="IPR013328">
    <property type="entry name" value="6PGD_dom2"/>
</dbReference>
<dbReference type="InterPro" id="IPR006114">
    <property type="entry name" value="6PGDH_C"/>
</dbReference>
<dbReference type="InterPro" id="IPR006113">
    <property type="entry name" value="6PGDH_Gnd/GntZ"/>
</dbReference>
<dbReference type="InterPro" id="IPR006115">
    <property type="entry name" value="6PGDH_NADP-bd"/>
</dbReference>
<dbReference type="InterPro" id="IPR006184">
    <property type="entry name" value="6PGdom_BS"/>
</dbReference>
<dbReference type="InterPro" id="IPR036291">
    <property type="entry name" value="NAD(P)-bd_dom_sf"/>
</dbReference>
<dbReference type="InterPro" id="IPR006183">
    <property type="entry name" value="Pgluconate_DH"/>
</dbReference>
<dbReference type="NCBIfam" id="TIGR00873">
    <property type="entry name" value="gnd"/>
    <property type="match status" value="1"/>
</dbReference>
<dbReference type="NCBIfam" id="NF006765">
    <property type="entry name" value="PRK09287.1"/>
    <property type="match status" value="1"/>
</dbReference>
<dbReference type="PANTHER" id="PTHR11811">
    <property type="entry name" value="6-PHOSPHOGLUCONATE DEHYDROGENASE"/>
    <property type="match status" value="1"/>
</dbReference>
<dbReference type="Pfam" id="PF00393">
    <property type="entry name" value="6PGD"/>
    <property type="match status" value="1"/>
</dbReference>
<dbReference type="Pfam" id="PF03446">
    <property type="entry name" value="NAD_binding_2"/>
    <property type="match status" value="1"/>
</dbReference>
<dbReference type="PIRSF" id="PIRSF000109">
    <property type="entry name" value="6PGD"/>
    <property type="match status" value="1"/>
</dbReference>
<dbReference type="PRINTS" id="PR00076">
    <property type="entry name" value="6PGDHDRGNASE"/>
</dbReference>
<dbReference type="SMART" id="SM01350">
    <property type="entry name" value="6PGD"/>
    <property type="match status" value="1"/>
</dbReference>
<dbReference type="SUPFAM" id="SSF48179">
    <property type="entry name" value="6-phosphogluconate dehydrogenase C-terminal domain-like"/>
    <property type="match status" value="1"/>
</dbReference>
<dbReference type="SUPFAM" id="SSF51735">
    <property type="entry name" value="NAD(P)-binding Rossmann-fold domains"/>
    <property type="match status" value="1"/>
</dbReference>
<dbReference type="PROSITE" id="PS00461">
    <property type="entry name" value="6PGD"/>
    <property type="match status" value="1"/>
</dbReference>
<reference key="1">
    <citation type="journal article" date="2003" name="Proc. Natl. Acad. Sci. U.S.A.">
        <title>Reductive genome evolution in Buchnera aphidicola.</title>
        <authorList>
            <person name="van Ham R.C.H.J."/>
            <person name="Kamerbeek J."/>
            <person name="Palacios C."/>
            <person name="Rausell C."/>
            <person name="Abascal F."/>
            <person name="Bastolla U."/>
            <person name="Fernandez J.M."/>
            <person name="Jimenez L."/>
            <person name="Postigo M."/>
            <person name="Silva F.J."/>
            <person name="Tamames J."/>
            <person name="Viguera E."/>
            <person name="Latorre A."/>
            <person name="Valencia A."/>
            <person name="Moran F."/>
            <person name="Moya A."/>
        </authorList>
    </citation>
    <scope>NUCLEOTIDE SEQUENCE [LARGE SCALE GENOMIC DNA]</scope>
    <source>
        <strain>Bp</strain>
    </source>
</reference>